<dbReference type="EC" id="2.5.1.61" evidence="1"/>
<dbReference type="EMBL" id="CP000647">
    <property type="protein sequence ID" value="ABR79672.1"/>
    <property type="molecule type" value="Genomic_DNA"/>
</dbReference>
<dbReference type="RefSeq" id="WP_002883381.1">
    <property type="nucleotide sequence ID" value="NC_009648.1"/>
</dbReference>
<dbReference type="SMR" id="A6TGI8"/>
<dbReference type="STRING" id="272620.KPN_04304"/>
<dbReference type="jPOST" id="A6TGI8"/>
<dbReference type="PaxDb" id="272620-KPN_04304"/>
<dbReference type="EnsemblBacteria" id="ABR79672">
    <property type="protein sequence ID" value="ABR79672"/>
    <property type="gene ID" value="KPN_04304"/>
</dbReference>
<dbReference type="KEGG" id="kpn:KPN_04304"/>
<dbReference type="HOGENOM" id="CLU_019704_0_2_6"/>
<dbReference type="UniPathway" id="UPA00251">
    <property type="reaction ID" value="UER00319"/>
</dbReference>
<dbReference type="Proteomes" id="UP000000265">
    <property type="component" value="Chromosome"/>
</dbReference>
<dbReference type="GO" id="GO:0005737">
    <property type="term" value="C:cytoplasm"/>
    <property type="evidence" value="ECO:0007669"/>
    <property type="project" value="TreeGrafter"/>
</dbReference>
<dbReference type="GO" id="GO:0004418">
    <property type="term" value="F:hydroxymethylbilane synthase activity"/>
    <property type="evidence" value="ECO:0007669"/>
    <property type="project" value="UniProtKB-UniRule"/>
</dbReference>
<dbReference type="GO" id="GO:0006782">
    <property type="term" value="P:protoporphyrinogen IX biosynthetic process"/>
    <property type="evidence" value="ECO:0007669"/>
    <property type="project" value="UniProtKB-UniRule"/>
</dbReference>
<dbReference type="CDD" id="cd13646">
    <property type="entry name" value="PBP2_EcHMBS_like"/>
    <property type="match status" value="1"/>
</dbReference>
<dbReference type="FunFam" id="3.30.160.40:FF:000002">
    <property type="entry name" value="Porphobilinogen deaminase"/>
    <property type="match status" value="1"/>
</dbReference>
<dbReference type="FunFam" id="3.40.190.10:FF:000004">
    <property type="entry name" value="Porphobilinogen deaminase"/>
    <property type="match status" value="1"/>
</dbReference>
<dbReference type="FunFam" id="3.40.190.10:FF:000005">
    <property type="entry name" value="Porphobilinogen deaminase"/>
    <property type="match status" value="1"/>
</dbReference>
<dbReference type="Gene3D" id="3.40.190.10">
    <property type="entry name" value="Periplasmic binding protein-like II"/>
    <property type="match status" value="2"/>
</dbReference>
<dbReference type="Gene3D" id="3.30.160.40">
    <property type="entry name" value="Porphobilinogen deaminase, C-terminal domain"/>
    <property type="match status" value="1"/>
</dbReference>
<dbReference type="HAMAP" id="MF_00260">
    <property type="entry name" value="Porphobil_deam"/>
    <property type="match status" value="1"/>
</dbReference>
<dbReference type="InterPro" id="IPR000860">
    <property type="entry name" value="HemC"/>
</dbReference>
<dbReference type="InterPro" id="IPR022419">
    <property type="entry name" value="Porphobilin_deaminase_cofac_BS"/>
</dbReference>
<dbReference type="InterPro" id="IPR022417">
    <property type="entry name" value="Porphobilin_deaminase_N"/>
</dbReference>
<dbReference type="InterPro" id="IPR022418">
    <property type="entry name" value="Porphobilinogen_deaminase_C"/>
</dbReference>
<dbReference type="InterPro" id="IPR036803">
    <property type="entry name" value="Porphobilinogen_deaminase_C_sf"/>
</dbReference>
<dbReference type="NCBIfam" id="TIGR00212">
    <property type="entry name" value="hemC"/>
    <property type="match status" value="1"/>
</dbReference>
<dbReference type="PANTHER" id="PTHR11557">
    <property type="entry name" value="PORPHOBILINOGEN DEAMINASE"/>
    <property type="match status" value="1"/>
</dbReference>
<dbReference type="PANTHER" id="PTHR11557:SF0">
    <property type="entry name" value="PORPHOBILINOGEN DEAMINASE"/>
    <property type="match status" value="1"/>
</dbReference>
<dbReference type="Pfam" id="PF01379">
    <property type="entry name" value="Porphobil_deam"/>
    <property type="match status" value="1"/>
</dbReference>
<dbReference type="Pfam" id="PF03900">
    <property type="entry name" value="Porphobil_deamC"/>
    <property type="match status" value="1"/>
</dbReference>
<dbReference type="PIRSF" id="PIRSF001438">
    <property type="entry name" value="4pyrrol_synth_OHMeBilane_synth"/>
    <property type="match status" value="1"/>
</dbReference>
<dbReference type="PRINTS" id="PR00151">
    <property type="entry name" value="PORPHBDMNASE"/>
</dbReference>
<dbReference type="SUPFAM" id="SSF53850">
    <property type="entry name" value="Periplasmic binding protein-like II"/>
    <property type="match status" value="1"/>
</dbReference>
<dbReference type="SUPFAM" id="SSF54782">
    <property type="entry name" value="Porphobilinogen deaminase (hydroxymethylbilane synthase), C-terminal domain"/>
    <property type="match status" value="1"/>
</dbReference>
<dbReference type="PROSITE" id="PS00533">
    <property type="entry name" value="PORPHOBILINOGEN_DEAM"/>
    <property type="match status" value="1"/>
</dbReference>
<keyword id="KW-0627">Porphyrin biosynthesis</keyword>
<keyword id="KW-0808">Transferase</keyword>
<reference key="1">
    <citation type="submission" date="2006-09" db="EMBL/GenBank/DDBJ databases">
        <authorList>
            <consortium name="The Klebsiella pneumonia Genome Sequencing Project"/>
            <person name="McClelland M."/>
            <person name="Sanderson E.K."/>
            <person name="Spieth J."/>
            <person name="Clifton W.S."/>
            <person name="Latreille P."/>
            <person name="Sabo A."/>
            <person name="Pepin K."/>
            <person name="Bhonagiri V."/>
            <person name="Porwollik S."/>
            <person name="Ali J."/>
            <person name="Wilson R.K."/>
        </authorList>
    </citation>
    <scope>NUCLEOTIDE SEQUENCE [LARGE SCALE GENOMIC DNA]</scope>
    <source>
        <strain>ATCC 700721 / MGH 78578</strain>
    </source>
</reference>
<accession>A6TGI8</accession>
<evidence type="ECO:0000255" key="1">
    <source>
        <dbReference type="HAMAP-Rule" id="MF_00260"/>
    </source>
</evidence>
<gene>
    <name evidence="1" type="primary">hemC</name>
    <name type="ordered locus">KPN78578_42480</name>
    <name type="ORF">KPN_04304</name>
</gene>
<proteinExistence type="inferred from homology"/>
<sequence length="313" mass="33801">MLDKVLKIATRQSPLALWQAQYVKARLEQAHPGLKVELVPMVTRGDVILDTPLAKVGGKGLFVKELELAMLEGRADIAVHSMKDVPVEFPEGLGLVTICERDDPRDAFVSNRYASIDELPAGSVVGTSSLRRQCQLAATRPDLAIRSLRGNVGTRLSKLDNGEYDAIILAAAGLKRLQLEARIRQPLSPEQSLPAVGQGAVGIECRLDDAWTRGLLAPLNHTETAVRVRAERAMNTRLEGGCQVPIGSYAELKDGELWLRALVGAPDGSQLVRGERRGPAEQAEALGISLAEELLDNGAREILAAVYDGEAPR</sequence>
<feature type="chain" id="PRO_1000047751" description="Porphobilinogen deaminase">
    <location>
        <begin position="1"/>
        <end position="313"/>
    </location>
</feature>
<feature type="modified residue" description="S-(dipyrrolylmethanemethyl)cysteine" evidence="1">
    <location>
        <position position="242"/>
    </location>
</feature>
<organism>
    <name type="scientific">Klebsiella pneumoniae subsp. pneumoniae (strain ATCC 700721 / MGH 78578)</name>
    <dbReference type="NCBI Taxonomy" id="272620"/>
    <lineage>
        <taxon>Bacteria</taxon>
        <taxon>Pseudomonadati</taxon>
        <taxon>Pseudomonadota</taxon>
        <taxon>Gammaproteobacteria</taxon>
        <taxon>Enterobacterales</taxon>
        <taxon>Enterobacteriaceae</taxon>
        <taxon>Klebsiella/Raoultella group</taxon>
        <taxon>Klebsiella</taxon>
        <taxon>Klebsiella pneumoniae complex</taxon>
    </lineage>
</organism>
<protein>
    <recommendedName>
        <fullName evidence="1">Porphobilinogen deaminase</fullName>
        <shortName evidence="1">PBG</shortName>
        <ecNumber evidence="1">2.5.1.61</ecNumber>
    </recommendedName>
    <alternativeName>
        <fullName evidence="1">Hydroxymethylbilane synthase</fullName>
        <shortName evidence="1">HMBS</shortName>
    </alternativeName>
    <alternativeName>
        <fullName evidence="1">Pre-uroporphyrinogen synthase</fullName>
    </alternativeName>
</protein>
<name>HEM3_KLEP7</name>
<comment type="function">
    <text evidence="1">Tetrapolymerization of the monopyrrole PBG into the hydroxymethylbilane pre-uroporphyrinogen in several discrete steps.</text>
</comment>
<comment type="catalytic activity">
    <reaction evidence="1">
        <text>4 porphobilinogen + H2O = hydroxymethylbilane + 4 NH4(+)</text>
        <dbReference type="Rhea" id="RHEA:13185"/>
        <dbReference type="ChEBI" id="CHEBI:15377"/>
        <dbReference type="ChEBI" id="CHEBI:28938"/>
        <dbReference type="ChEBI" id="CHEBI:57845"/>
        <dbReference type="ChEBI" id="CHEBI:58126"/>
        <dbReference type="EC" id="2.5.1.61"/>
    </reaction>
</comment>
<comment type="cofactor">
    <cofactor evidence="1">
        <name>dipyrromethane</name>
        <dbReference type="ChEBI" id="CHEBI:60342"/>
    </cofactor>
    <text evidence="1">Binds 1 dipyrromethane group covalently.</text>
</comment>
<comment type="pathway">
    <text evidence="1">Porphyrin-containing compound metabolism; protoporphyrin-IX biosynthesis; coproporphyrinogen-III from 5-aminolevulinate: step 2/4.</text>
</comment>
<comment type="subunit">
    <text evidence="1">Monomer.</text>
</comment>
<comment type="miscellaneous">
    <text evidence="1">The porphobilinogen subunits are added to the dipyrromethane group.</text>
</comment>
<comment type="similarity">
    <text evidence="1">Belongs to the HMBS family.</text>
</comment>